<dbReference type="EC" id="6.1.1.3" evidence="1"/>
<dbReference type="EMBL" id="BX640415">
    <property type="protein sequence ID" value="CAE41786.1"/>
    <property type="molecule type" value="Genomic_DNA"/>
</dbReference>
<dbReference type="RefSeq" id="NP_880233.1">
    <property type="nucleotide sequence ID" value="NC_002929.2"/>
</dbReference>
<dbReference type="RefSeq" id="WP_003812608.1">
    <property type="nucleotide sequence ID" value="NZ_CP039022.1"/>
</dbReference>
<dbReference type="SMR" id="Q7VY64"/>
<dbReference type="STRING" id="257313.BP1497"/>
<dbReference type="PaxDb" id="257313-BP1497"/>
<dbReference type="GeneID" id="93203735"/>
<dbReference type="KEGG" id="bpe:BP1497"/>
<dbReference type="PATRIC" id="fig|257313.5.peg.1608"/>
<dbReference type="eggNOG" id="COG0441">
    <property type="taxonomic scope" value="Bacteria"/>
</dbReference>
<dbReference type="HOGENOM" id="CLU_008554_0_1_4"/>
<dbReference type="Proteomes" id="UP000002676">
    <property type="component" value="Chromosome"/>
</dbReference>
<dbReference type="GO" id="GO:0005829">
    <property type="term" value="C:cytosol"/>
    <property type="evidence" value="ECO:0007669"/>
    <property type="project" value="TreeGrafter"/>
</dbReference>
<dbReference type="GO" id="GO:0005524">
    <property type="term" value="F:ATP binding"/>
    <property type="evidence" value="ECO:0007669"/>
    <property type="project" value="UniProtKB-UniRule"/>
</dbReference>
<dbReference type="GO" id="GO:0046872">
    <property type="term" value="F:metal ion binding"/>
    <property type="evidence" value="ECO:0007669"/>
    <property type="project" value="UniProtKB-KW"/>
</dbReference>
<dbReference type="GO" id="GO:0004829">
    <property type="term" value="F:threonine-tRNA ligase activity"/>
    <property type="evidence" value="ECO:0007669"/>
    <property type="project" value="UniProtKB-UniRule"/>
</dbReference>
<dbReference type="GO" id="GO:0000049">
    <property type="term" value="F:tRNA binding"/>
    <property type="evidence" value="ECO:0007669"/>
    <property type="project" value="UniProtKB-KW"/>
</dbReference>
<dbReference type="GO" id="GO:0006435">
    <property type="term" value="P:threonyl-tRNA aminoacylation"/>
    <property type="evidence" value="ECO:0007669"/>
    <property type="project" value="UniProtKB-UniRule"/>
</dbReference>
<dbReference type="CDD" id="cd01667">
    <property type="entry name" value="TGS_ThrRS"/>
    <property type="match status" value="1"/>
</dbReference>
<dbReference type="CDD" id="cd00860">
    <property type="entry name" value="ThrRS_anticodon"/>
    <property type="match status" value="1"/>
</dbReference>
<dbReference type="CDD" id="cd00771">
    <property type="entry name" value="ThrRS_core"/>
    <property type="match status" value="1"/>
</dbReference>
<dbReference type="FunFam" id="3.10.20.30:FF:000005">
    <property type="entry name" value="Threonine--tRNA ligase"/>
    <property type="match status" value="1"/>
</dbReference>
<dbReference type="FunFam" id="3.30.54.20:FF:000002">
    <property type="entry name" value="Threonine--tRNA ligase"/>
    <property type="match status" value="1"/>
</dbReference>
<dbReference type="FunFam" id="3.30.930.10:FF:000002">
    <property type="entry name" value="Threonine--tRNA ligase"/>
    <property type="match status" value="1"/>
</dbReference>
<dbReference type="FunFam" id="3.40.50.800:FF:000001">
    <property type="entry name" value="Threonine--tRNA ligase"/>
    <property type="match status" value="1"/>
</dbReference>
<dbReference type="FunFam" id="3.30.980.10:FF:000005">
    <property type="entry name" value="Threonyl-tRNA synthetase, mitochondrial"/>
    <property type="match status" value="1"/>
</dbReference>
<dbReference type="Gene3D" id="3.10.20.30">
    <property type="match status" value="1"/>
</dbReference>
<dbReference type="Gene3D" id="3.30.54.20">
    <property type="match status" value="1"/>
</dbReference>
<dbReference type="Gene3D" id="3.40.50.800">
    <property type="entry name" value="Anticodon-binding domain"/>
    <property type="match status" value="1"/>
</dbReference>
<dbReference type="Gene3D" id="3.30.930.10">
    <property type="entry name" value="Bira Bifunctional Protein, Domain 2"/>
    <property type="match status" value="1"/>
</dbReference>
<dbReference type="Gene3D" id="3.30.980.10">
    <property type="entry name" value="Threonyl-trna Synthetase, Chain A, domain 2"/>
    <property type="match status" value="1"/>
</dbReference>
<dbReference type="HAMAP" id="MF_00184">
    <property type="entry name" value="Thr_tRNA_synth"/>
    <property type="match status" value="1"/>
</dbReference>
<dbReference type="InterPro" id="IPR002314">
    <property type="entry name" value="aa-tRNA-synt_IIb"/>
</dbReference>
<dbReference type="InterPro" id="IPR006195">
    <property type="entry name" value="aa-tRNA-synth_II"/>
</dbReference>
<dbReference type="InterPro" id="IPR045864">
    <property type="entry name" value="aa-tRNA-synth_II/BPL/LPL"/>
</dbReference>
<dbReference type="InterPro" id="IPR004154">
    <property type="entry name" value="Anticodon-bd"/>
</dbReference>
<dbReference type="InterPro" id="IPR036621">
    <property type="entry name" value="Anticodon-bd_dom_sf"/>
</dbReference>
<dbReference type="InterPro" id="IPR012675">
    <property type="entry name" value="Beta-grasp_dom_sf"/>
</dbReference>
<dbReference type="InterPro" id="IPR004095">
    <property type="entry name" value="TGS"/>
</dbReference>
<dbReference type="InterPro" id="IPR012676">
    <property type="entry name" value="TGS-like"/>
</dbReference>
<dbReference type="InterPro" id="IPR002320">
    <property type="entry name" value="Thr-tRNA-ligase_IIa"/>
</dbReference>
<dbReference type="InterPro" id="IPR018163">
    <property type="entry name" value="Thr/Ala-tRNA-synth_IIc_edit"/>
</dbReference>
<dbReference type="InterPro" id="IPR047246">
    <property type="entry name" value="ThrRS_anticodon"/>
</dbReference>
<dbReference type="InterPro" id="IPR033728">
    <property type="entry name" value="ThrRS_core"/>
</dbReference>
<dbReference type="InterPro" id="IPR012947">
    <property type="entry name" value="tRNA_SAD"/>
</dbReference>
<dbReference type="NCBIfam" id="TIGR00418">
    <property type="entry name" value="thrS"/>
    <property type="match status" value="1"/>
</dbReference>
<dbReference type="PANTHER" id="PTHR11451:SF44">
    <property type="entry name" value="THREONINE--TRNA LIGASE, CHLOROPLASTIC_MITOCHONDRIAL 2"/>
    <property type="match status" value="1"/>
</dbReference>
<dbReference type="PANTHER" id="PTHR11451">
    <property type="entry name" value="THREONINE-TRNA LIGASE"/>
    <property type="match status" value="1"/>
</dbReference>
<dbReference type="Pfam" id="PF03129">
    <property type="entry name" value="HGTP_anticodon"/>
    <property type="match status" value="1"/>
</dbReference>
<dbReference type="Pfam" id="PF02824">
    <property type="entry name" value="TGS"/>
    <property type="match status" value="1"/>
</dbReference>
<dbReference type="Pfam" id="PF00587">
    <property type="entry name" value="tRNA-synt_2b"/>
    <property type="match status" value="1"/>
</dbReference>
<dbReference type="Pfam" id="PF07973">
    <property type="entry name" value="tRNA_SAD"/>
    <property type="match status" value="1"/>
</dbReference>
<dbReference type="PRINTS" id="PR01047">
    <property type="entry name" value="TRNASYNTHTHR"/>
</dbReference>
<dbReference type="SMART" id="SM00863">
    <property type="entry name" value="tRNA_SAD"/>
    <property type="match status" value="1"/>
</dbReference>
<dbReference type="SUPFAM" id="SSF52954">
    <property type="entry name" value="Class II aaRS ABD-related"/>
    <property type="match status" value="1"/>
</dbReference>
<dbReference type="SUPFAM" id="SSF55681">
    <property type="entry name" value="Class II aaRS and biotin synthetases"/>
    <property type="match status" value="1"/>
</dbReference>
<dbReference type="SUPFAM" id="SSF81271">
    <property type="entry name" value="TGS-like"/>
    <property type="match status" value="1"/>
</dbReference>
<dbReference type="SUPFAM" id="SSF55186">
    <property type="entry name" value="ThrRS/AlaRS common domain"/>
    <property type="match status" value="1"/>
</dbReference>
<dbReference type="PROSITE" id="PS50862">
    <property type="entry name" value="AA_TRNA_LIGASE_II"/>
    <property type="match status" value="1"/>
</dbReference>
<dbReference type="PROSITE" id="PS51880">
    <property type="entry name" value="TGS"/>
    <property type="match status" value="1"/>
</dbReference>
<proteinExistence type="inferred from homology"/>
<organism>
    <name type="scientific">Bordetella pertussis (strain Tohama I / ATCC BAA-589 / NCTC 13251)</name>
    <dbReference type="NCBI Taxonomy" id="257313"/>
    <lineage>
        <taxon>Bacteria</taxon>
        <taxon>Pseudomonadati</taxon>
        <taxon>Pseudomonadota</taxon>
        <taxon>Betaproteobacteria</taxon>
        <taxon>Burkholderiales</taxon>
        <taxon>Alcaligenaceae</taxon>
        <taxon>Bordetella</taxon>
    </lineage>
</organism>
<sequence>MVQITLPDGSQRQYPGPVTVAEVAQSIGAGLAKAALAGRVAFDGAEPRLVDTSFRIDNDAQLAIVTAKDADGLDLIRHSTAHLLAYAVKSLFPDAQVTIGPVIDNGFYYDFSYKRPFTPEDLQAIEKKMAELARKDEVVTREEWSRDEAVAYFKGIGEVYKAEIIASIPSNETLSLYREGDFIDLCRGPHVPSTGKLKVFKLMKVAGAYWRGDSKNEMLQRIYGTAWASKDDQDAYLHMLEEAERRDHRKIGRELDLFHFQDEAPGLIFWHPKGWALWQQVEQYMRKVYQDNGYQEVKAPQILDLTLWKKTGHWDNYRENMFTTESENRVYGLKPMNCPGHVQIFNAGLHSYRELPLRYGEFGQCHRNEPSGSLHGMMRVRGFTQDDGHIFCTEDQLQDECAAFTALLQKVYKDFGFTEVLYKVATRPEKRIGSDEIWDKAETALMESLRRTGCEFEISPGEGAFYGPKVEYTLKDAIGRHWQCGTIQVDFSMPVRLGAEYVDQNDQRRPPVMLHRAILGSLERFIGMLIENHAGAMPPWLAPLQAVVCCISEHSAEYAAQITQSLKKQGFRVQADLRGEKITRKIREHSLQKIPYLLVVGDKEMQNGTVAVRGLGGLDLGVIALDDFIARLAEDISTRRNVTQLASAA</sequence>
<gene>
    <name evidence="1" type="primary">thrS</name>
    <name type="ordered locus">BP1497</name>
</gene>
<keyword id="KW-0030">Aminoacyl-tRNA synthetase</keyword>
<keyword id="KW-0067">ATP-binding</keyword>
<keyword id="KW-0963">Cytoplasm</keyword>
<keyword id="KW-0436">Ligase</keyword>
<keyword id="KW-0479">Metal-binding</keyword>
<keyword id="KW-0547">Nucleotide-binding</keyword>
<keyword id="KW-0648">Protein biosynthesis</keyword>
<keyword id="KW-1185">Reference proteome</keyword>
<keyword id="KW-0694">RNA-binding</keyword>
<keyword id="KW-0820">tRNA-binding</keyword>
<keyword id="KW-0862">Zinc</keyword>
<comment type="function">
    <text evidence="1">Catalyzes the attachment of threonine to tRNA(Thr) in a two-step reaction: L-threonine is first activated by ATP to form Thr-AMP and then transferred to the acceptor end of tRNA(Thr). Also edits incorrectly charged L-seryl-tRNA(Thr).</text>
</comment>
<comment type="catalytic activity">
    <reaction evidence="1">
        <text>tRNA(Thr) + L-threonine + ATP = L-threonyl-tRNA(Thr) + AMP + diphosphate + H(+)</text>
        <dbReference type="Rhea" id="RHEA:24624"/>
        <dbReference type="Rhea" id="RHEA-COMP:9670"/>
        <dbReference type="Rhea" id="RHEA-COMP:9704"/>
        <dbReference type="ChEBI" id="CHEBI:15378"/>
        <dbReference type="ChEBI" id="CHEBI:30616"/>
        <dbReference type="ChEBI" id="CHEBI:33019"/>
        <dbReference type="ChEBI" id="CHEBI:57926"/>
        <dbReference type="ChEBI" id="CHEBI:78442"/>
        <dbReference type="ChEBI" id="CHEBI:78534"/>
        <dbReference type="ChEBI" id="CHEBI:456215"/>
        <dbReference type="EC" id="6.1.1.3"/>
    </reaction>
</comment>
<comment type="cofactor">
    <cofactor evidence="1">
        <name>Zn(2+)</name>
        <dbReference type="ChEBI" id="CHEBI:29105"/>
    </cofactor>
    <text evidence="1">Binds 1 zinc ion per subunit.</text>
</comment>
<comment type="subunit">
    <text evidence="1">Homodimer.</text>
</comment>
<comment type="subcellular location">
    <subcellularLocation>
        <location evidence="1">Cytoplasm</location>
    </subcellularLocation>
</comment>
<comment type="similarity">
    <text evidence="1">Belongs to the class-II aminoacyl-tRNA synthetase family.</text>
</comment>
<feature type="chain" id="PRO_1000020349" description="Threonine--tRNA ligase">
    <location>
        <begin position="1"/>
        <end position="649"/>
    </location>
</feature>
<feature type="domain" description="TGS" evidence="2">
    <location>
        <begin position="1"/>
        <end position="66"/>
    </location>
</feature>
<feature type="region of interest" description="Catalytic" evidence="1">
    <location>
        <begin position="247"/>
        <end position="538"/>
    </location>
</feature>
<feature type="binding site" evidence="1">
    <location>
        <position position="338"/>
    </location>
    <ligand>
        <name>Zn(2+)</name>
        <dbReference type="ChEBI" id="CHEBI:29105"/>
    </ligand>
</feature>
<feature type="binding site" evidence="1">
    <location>
        <position position="389"/>
    </location>
    <ligand>
        <name>Zn(2+)</name>
        <dbReference type="ChEBI" id="CHEBI:29105"/>
    </ligand>
</feature>
<feature type="binding site" evidence="1">
    <location>
        <position position="515"/>
    </location>
    <ligand>
        <name>Zn(2+)</name>
        <dbReference type="ChEBI" id="CHEBI:29105"/>
    </ligand>
</feature>
<protein>
    <recommendedName>
        <fullName evidence="1">Threonine--tRNA ligase</fullName>
        <ecNumber evidence="1">6.1.1.3</ecNumber>
    </recommendedName>
    <alternativeName>
        <fullName evidence="1">Threonyl-tRNA synthetase</fullName>
        <shortName evidence="1">ThrRS</shortName>
    </alternativeName>
</protein>
<name>SYT_BORPE</name>
<accession>Q7VY64</accession>
<evidence type="ECO:0000255" key="1">
    <source>
        <dbReference type="HAMAP-Rule" id="MF_00184"/>
    </source>
</evidence>
<evidence type="ECO:0000255" key="2">
    <source>
        <dbReference type="PROSITE-ProRule" id="PRU01228"/>
    </source>
</evidence>
<reference key="1">
    <citation type="journal article" date="2003" name="Nat. Genet.">
        <title>Comparative analysis of the genome sequences of Bordetella pertussis, Bordetella parapertussis and Bordetella bronchiseptica.</title>
        <authorList>
            <person name="Parkhill J."/>
            <person name="Sebaihia M."/>
            <person name="Preston A."/>
            <person name="Murphy L.D."/>
            <person name="Thomson N.R."/>
            <person name="Harris D.E."/>
            <person name="Holden M.T.G."/>
            <person name="Churcher C.M."/>
            <person name="Bentley S.D."/>
            <person name="Mungall K.L."/>
            <person name="Cerdeno-Tarraga A.-M."/>
            <person name="Temple L."/>
            <person name="James K.D."/>
            <person name="Harris B."/>
            <person name="Quail M.A."/>
            <person name="Achtman M."/>
            <person name="Atkin R."/>
            <person name="Baker S."/>
            <person name="Basham D."/>
            <person name="Bason N."/>
            <person name="Cherevach I."/>
            <person name="Chillingworth T."/>
            <person name="Collins M."/>
            <person name="Cronin A."/>
            <person name="Davis P."/>
            <person name="Doggett J."/>
            <person name="Feltwell T."/>
            <person name="Goble A."/>
            <person name="Hamlin N."/>
            <person name="Hauser H."/>
            <person name="Holroyd S."/>
            <person name="Jagels K."/>
            <person name="Leather S."/>
            <person name="Moule S."/>
            <person name="Norberczak H."/>
            <person name="O'Neil S."/>
            <person name="Ormond D."/>
            <person name="Price C."/>
            <person name="Rabbinowitsch E."/>
            <person name="Rutter S."/>
            <person name="Sanders M."/>
            <person name="Saunders D."/>
            <person name="Seeger K."/>
            <person name="Sharp S."/>
            <person name="Simmonds M."/>
            <person name="Skelton J."/>
            <person name="Squares R."/>
            <person name="Squares S."/>
            <person name="Stevens K."/>
            <person name="Unwin L."/>
            <person name="Whitehead S."/>
            <person name="Barrell B.G."/>
            <person name="Maskell D.J."/>
        </authorList>
    </citation>
    <scope>NUCLEOTIDE SEQUENCE [LARGE SCALE GENOMIC DNA]</scope>
    <source>
        <strain>Tohama I / ATCC BAA-589 / NCTC 13251</strain>
    </source>
</reference>